<reference key="1">
    <citation type="journal article" date="2005" name="Science">
        <title>Extensive DNA inversions in the B. fragilis genome control variable gene expression.</title>
        <authorList>
            <person name="Cerdeno-Tarraga A.-M."/>
            <person name="Patrick S."/>
            <person name="Crossman L.C."/>
            <person name="Blakely G."/>
            <person name="Abratt V."/>
            <person name="Lennard N."/>
            <person name="Poxton I."/>
            <person name="Duerden B."/>
            <person name="Harris B."/>
            <person name="Quail M.A."/>
            <person name="Barron A."/>
            <person name="Clark L."/>
            <person name="Corton C."/>
            <person name="Doggett J."/>
            <person name="Holden M.T.G."/>
            <person name="Larke N."/>
            <person name="Line A."/>
            <person name="Lord A."/>
            <person name="Norbertczak H."/>
            <person name="Ormond D."/>
            <person name="Price C."/>
            <person name="Rabbinowitsch E."/>
            <person name="Woodward J."/>
            <person name="Barrell B.G."/>
            <person name="Parkhill J."/>
        </authorList>
    </citation>
    <scope>NUCLEOTIDE SEQUENCE [LARGE SCALE GENOMIC DNA]</scope>
    <source>
        <strain>ATCC 25285 / DSM 2151 / CCUG 4856 / JCM 11019 / LMG 10263 / NCTC 9343 / Onslow / VPI 2553 / EN-2</strain>
    </source>
</reference>
<organism>
    <name type="scientific">Bacteroides fragilis (strain ATCC 25285 / DSM 2151 / CCUG 4856 / JCM 11019 / LMG 10263 / NCTC 9343 / Onslow / VPI 2553 / EN-2)</name>
    <dbReference type="NCBI Taxonomy" id="272559"/>
    <lineage>
        <taxon>Bacteria</taxon>
        <taxon>Pseudomonadati</taxon>
        <taxon>Bacteroidota</taxon>
        <taxon>Bacteroidia</taxon>
        <taxon>Bacteroidales</taxon>
        <taxon>Bacteroidaceae</taxon>
        <taxon>Bacteroides</taxon>
    </lineage>
</organism>
<name>LGT_BACFN</name>
<gene>
    <name evidence="1" type="primary">lgt</name>
    <name type="ordered locus">BF4367</name>
</gene>
<keyword id="KW-0997">Cell inner membrane</keyword>
<keyword id="KW-1003">Cell membrane</keyword>
<keyword id="KW-0472">Membrane</keyword>
<keyword id="KW-0808">Transferase</keyword>
<keyword id="KW-0812">Transmembrane</keyword>
<keyword id="KW-1133">Transmembrane helix</keyword>
<accession>Q5L7B9</accession>
<comment type="function">
    <text evidence="1">Catalyzes the transfer of the diacylglyceryl group from phosphatidylglycerol to the sulfhydryl group of the N-terminal cysteine of a prolipoprotein, the first step in the formation of mature lipoproteins.</text>
</comment>
<comment type="catalytic activity">
    <reaction evidence="1">
        <text>L-cysteinyl-[prolipoprotein] + a 1,2-diacyl-sn-glycero-3-phospho-(1'-sn-glycerol) = an S-1,2-diacyl-sn-glyceryl-L-cysteinyl-[prolipoprotein] + sn-glycerol 1-phosphate + H(+)</text>
        <dbReference type="Rhea" id="RHEA:56712"/>
        <dbReference type="Rhea" id="RHEA-COMP:14679"/>
        <dbReference type="Rhea" id="RHEA-COMP:14680"/>
        <dbReference type="ChEBI" id="CHEBI:15378"/>
        <dbReference type="ChEBI" id="CHEBI:29950"/>
        <dbReference type="ChEBI" id="CHEBI:57685"/>
        <dbReference type="ChEBI" id="CHEBI:64716"/>
        <dbReference type="ChEBI" id="CHEBI:140658"/>
        <dbReference type="EC" id="2.5.1.145"/>
    </reaction>
</comment>
<comment type="pathway">
    <text evidence="1">Protein modification; lipoprotein biosynthesis (diacylglyceryl transfer).</text>
</comment>
<comment type="subcellular location">
    <subcellularLocation>
        <location evidence="1">Cell inner membrane</location>
        <topology evidence="1">Multi-pass membrane protein</topology>
    </subcellularLocation>
</comment>
<comment type="similarity">
    <text evidence="1">Belongs to the Lgt family.</text>
</comment>
<evidence type="ECO:0000255" key="1">
    <source>
        <dbReference type="HAMAP-Rule" id="MF_01147"/>
    </source>
</evidence>
<feature type="chain" id="PRO_1000053389" description="Phosphatidylglycerol--prolipoprotein diacylglyceryl transferase">
    <location>
        <begin position="1"/>
        <end position="277"/>
    </location>
</feature>
<feature type="transmembrane region" description="Helical" evidence="1">
    <location>
        <begin position="22"/>
        <end position="42"/>
    </location>
</feature>
<feature type="transmembrane region" description="Helical" evidence="1">
    <location>
        <begin position="59"/>
        <end position="79"/>
    </location>
</feature>
<feature type="transmembrane region" description="Helical" evidence="1">
    <location>
        <begin position="107"/>
        <end position="127"/>
    </location>
</feature>
<feature type="transmembrane region" description="Helical" evidence="1">
    <location>
        <begin position="133"/>
        <end position="153"/>
    </location>
</feature>
<feature type="transmembrane region" description="Helical" evidence="1">
    <location>
        <begin position="186"/>
        <end position="206"/>
    </location>
</feature>
<feature type="transmembrane region" description="Helical" evidence="1">
    <location>
        <begin position="216"/>
        <end position="236"/>
    </location>
</feature>
<feature type="transmembrane region" description="Helical" evidence="1">
    <location>
        <begin position="251"/>
        <end position="271"/>
    </location>
</feature>
<feature type="binding site" evidence="1">
    <location>
        <position position="154"/>
    </location>
    <ligand>
        <name>a 1,2-diacyl-sn-glycero-3-phospho-(1'-sn-glycerol)</name>
        <dbReference type="ChEBI" id="CHEBI:64716"/>
    </ligand>
</feature>
<protein>
    <recommendedName>
        <fullName evidence="1">Phosphatidylglycerol--prolipoprotein diacylglyceryl transferase</fullName>
        <ecNumber evidence="1">2.5.1.145</ecNumber>
    </recommendedName>
</protein>
<sequence length="277" mass="32600">MNNLLLSINWNPNPELFNLFGISIRYYGLLWAIGIFFAYIVVHYQYRDKKIDEKKFEPLFFYCFFGILIGARLGHCLFYDPGYYLNHFWEMILPVKFLPGGGWKFTGYEGLASHGGTLGLIISLWLYCRKTKMNYMDVVDMIAVATPITACFIRLANLMNSEIIGKVTDVSWAFVFERVDMQPRHPAQLYEAIAYFILFLVMMFLYKNYSKKLHRGFFFGLCLTAIFTFRFFVEFLKENQVDFENSMALNMGQWLSIPFVIIGIYFMFFYGKKKSVK</sequence>
<proteinExistence type="inferred from homology"/>
<dbReference type="EC" id="2.5.1.145" evidence="1"/>
<dbReference type="EMBL" id="CR626927">
    <property type="protein sequence ID" value="CAH10033.1"/>
    <property type="molecule type" value="Genomic_DNA"/>
</dbReference>
<dbReference type="RefSeq" id="WP_005783541.1">
    <property type="nucleotide sequence ID" value="NZ_UFTH01000001.1"/>
</dbReference>
<dbReference type="SMR" id="Q5L7B9"/>
<dbReference type="PaxDb" id="272559-BF9343_4252"/>
<dbReference type="GeneID" id="60366824"/>
<dbReference type="KEGG" id="bfs:BF9343_4252"/>
<dbReference type="eggNOG" id="COG0682">
    <property type="taxonomic scope" value="Bacteria"/>
</dbReference>
<dbReference type="HOGENOM" id="CLU_013386_1_0_10"/>
<dbReference type="UniPathway" id="UPA00664"/>
<dbReference type="Proteomes" id="UP000006731">
    <property type="component" value="Chromosome"/>
</dbReference>
<dbReference type="GO" id="GO:0005886">
    <property type="term" value="C:plasma membrane"/>
    <property type="evidence" value="ECO:0007669"/>
    <property type="project" value="UniProtKB-SubCell"/>
</dbReference>
<dbReference type="GO" id="GO:0008961">
    <property type="term" value="F:phosphatidylglycerol-prolipoprotein diacylglyceryl transferase activity"/>
    <property type="evidence" value="ECO:0007669"/>
    <property type="project" value="UniProtKB-UniRule"/>
</dbReference>
<dbReference type="GO" id="GO:0042158">
    <property type="term" value="P:lipoprotein biosynthetic process"/>
    <property type="evidence" value="ECO:0007669"/>
    <property type="project" value="UniProtKB-UniRule"/>
</dbReference>
<dbReference type="HAMAP" id="MF_01147">
    <property type="entry name" value="Lgt"/>
    <property type="match status" value="1"/>
</dbReference>
<dbReference type="InterPro" id="IPR001640">
    <property type="entry name" value="Lgt"/>
</dbReference>
<dbReference type="NCBIfam" id="TIGR00544">
    <property type="entry name" value="lgt"/>
    <property type="match status" value="1"/>
</dbReference>
<dbReference type="PANTHER" id="PTHR30589:SF0">
    <property type="entry name" value="PHOSPHATIDYLGLYCEROL--PROLIPOPROTEIN DIACYLGLYCERYL TRANSFERASE"/>
    <property type="match status" value="1"/>
</dbReference>
<dbReference type="PANTHER" id="PTHR30589">
    <property type="entry name" value="PROLIPOPROTEIN DIACYLGLYCERYL TRANSFERASE"/>
    <property type="match status" value="1"/>
</dbReference>
<dbReference type="Pfam" id="PF01790">
    <property type="entry name" value="LGT"/>
    <property type="match status" value="1"/>
</dbReference>